<organism>
    <name type="scientific">Schizosaccharomyces pombe (strain 972 / ATCC 24843)</name>
    <name type="common">Fission yeast</name>
    <dbReference type="NCBI Taxonomy" id="284812"/>
    <lineage>
        <taxon>Eukaryota</taxon>
        <taxon>Fungi</taxon>
        <taxon>Dikarya</taxon>
        <taxon>Ascomycota</taxon>
        <taxon>Taphrinomycotina</taxon>
        <taxon>Schizosaccharomycetes</taxon>
        <taxon>Schizosaccharomycetales</taxon>
        <taxon>Schizosaccharomycetaceae</taxon>
        <taxon>Schizosaccharomyces</taxon>
    </lineage>
</organism>
<gene>
    <name type="ORF">SPBC29A3.07c</name>
</gene>
<proteinExistence type="inferred from homology"/>
<keyword id="KW-0507">mRNA processing</keyword>
<keyword id="KW-0508">mRNA splicing</keyword>
<keyword id="KW-0539">Nucleus</keyword>
<keyword id="KW-1185">Reference proteome</keyword>
<keyword id="KW-0694">RNA-binding</keyword>
<name>SF3B6_SCHPO</name>
<protein>
    <recommendedName>
        <fullName>Splicing factor 3B subunit 6-like protein</fullName>
    </recommendedName>
    <alternativeName>
        <fullName>Pre-mRNA branch site p14-like protein</fullName>
    </alternativeName>
</protein>
<comment type="function">
    <text evidence="1">Necessary for the splicing of pre-mRNA.</text>
</comment>
<comment type="subcellular location">
    <subcellularLocation>
        <location evidence="3">Nucleus</location>
    </subcellularLocation>
</comment>
<sequence>MPPSTVNQEVNSILFIKNLSFKITAEEMYDLFGRYGPVRQIRLGNTVQTRGTAFVVYENVQDARRACEKLSGYNFMDRYLVVHYYNPERAKVDGQDLAARYAALEQVKQKYGVQL</sequence>
<accession>O59670</accession>
<dbReference type="EMBL" id="CU329671">
    <property type="protein sequence ID" value="CAA18384.2"/>
    <property type="molecule type" value="Genomic_DNA"/>
</dbReference>
<dbReference type="PIR" id="T40078">
    <property type="entry name" value="T40078"/>
</dbReference>
<dbReference type="SMR" id="O59670"/>
<dbReference type="FunCoup" id="O59670">
    <property type="interactions" value="754"/>
</dbReference>
<dbReference type="IntAct" id="O59670">
    <property type="interactions" value="3"/>
</dbReference>
<dbReference type="STRING" id="284812.O59670"/>
<dbReference type="iPTMnet" id="O59670"/>
<dbReference type="PaxDb" id="4896-SPBC29A3.07c.1"/>
<dbReference type="KEGG" id="spo:2540462"/>
<dbReference type="PomBase" id="SPBC29A3.07c"/>
<dbReference type="eggNOG" id="KOG0114">
    <property type="taxonomic scope" value="Eukaryota"/>
</dbReference>
<dbReference type="HOGENOM" id="CLU_012062_25_2_1"/>
<dbReference type="InParanoid" id="O59670"/>
<dbReference type="PhylomeDB" id="O59670"/>
<dbReference type="PRO" id="PR:O59670"/>
<dbReference type="Proteomes" id="UP000002485">
    <property type="component" value="Chromosome II"/>
</dbReference>
<dbReference type="GO" id="GO:0005686">
    <property type="term" value="C:U2 snRNP"/>
    <property type="evidence" value="ECO:0000314"/>
    <property type="project" value="PomBase"/>
</dbReference>
<dbReference type="GO" id="GO:0003723">
    <property type="term" value="F:RNA binding"/>
    <property type="evidence" value="ECO:0000255"/>
    <property type="project" value="PomBase"/>
</dbReference>
<dbReference type="GO" id="GO:0045292">
    <property type="term" value="P:mRNA cis splicing, via spliceosome"/>
    <property type="evidence" value="ECO:0000269"/>
    <property type="project" value="PomBase"/>
</dbReference>
<dbReference type="CDD" id="cd12241">
    <property type="entry name" value="RRM_SF3B14"/>
    <property type="match status" value="1"/>
</dbReference>
<dbReference type="FunFam" id="3.30.70.330:FF:000286">
    <property type="entry name" value="Putative pre-mRNA branch site protein p14"/>
    <property type="match status" value="1"/>
</dbReference>
<dbReference type="Gene3D" id="3.30.70.330">
    <property type="match status" value="1"/>
</dbReference>
<dbReference type="InterPro" id="IPR012677">
    <property type="entry name" value="Nucleotide-bd_a/b_plait_sf"/>
</dbReference>
<dbReference type="InterPro" id="IPR035979">
    <property type="entry name" value="RBD_domain_sf"/>
</dbReference>
<dbReference type="InterPro" id="IPR000504">
    <property type="entry name" value="RRM_dom"/>
</dbReference>
<dbReference type="InterPro" id="IPR050374">
    <property type="entry name" value="RRT5_SRSF_SR"/>
</dbReference>
<dbReference type="InterPro" id="IPR034150">
    <property type="entry name" value="SF3B6_RRM"/>
</dbReference>
<dbReference type="PANTHER" id="PTHR23003">
    <property type="entry name" value="RNA RECOGNITION MOTIF RRM DOMAIN CONTAINING PROTEIN"/>
    <property type="match status" value="1"/>
</dbReference>
<dbReference type="Pfam" id="PF00076">
    <property type="entry name" value="RRM_1"/>
    <property type="match status" value="1"/>
</dbReference>
<dbReference type="SMART" id="SM00360">
    <property type="entry name" value="RRM"/>
    <property type="match status" value="1"/>
</dbReference>
<dbReference type="SUPFAM" id="SSF54928">
    <property type="entry name" value="RNA-binding domain, RBD"/>
    <property type="match status" value="1"/>
</dbReference>
<dbReference type="PROSITE" id="PS50102">
    <property type="entry name" value="RRM"/>
    <property type="match status" value="1"/>
</dbReference>
<evidence type="ECO:0000250" key="1"/>
<evidence type="ECO:0000255" key="2">
    <source>
        <dbReference type="PROSITE-ProRule" id="PRU00176"/>
    </source>
</evidence>
<evidence type="ECO:0000305" key="3"/>
<feature type="chain" id="PRO_0000310809" description="Splicing factor 3B subunit 6-like protein">
    <location>
        <begin position="1"/>
        <end position="115"/>
    </location>
</feature>
<feature type="domain" description="RRM" evidence="2">
    <location>
        <begin position="12"/>
        <end position="87"/>
    </location>
</feature>
<feature type="region of interest" description="Interaction with pre-mRNA branch site" evidence="1">
    <location>
        <begin position="9"/>
        <end position="22"/>
    </location>
</feature>
<reference key="1">
    <citation type="journal article" date="2002" name="Nature">
        <title>The genome sequence of Schizosaccharomyces pombe.</title>
        <authorList>
            <person name="Wood V."/>
            <person name="Gwilliam R."/>
            <person name="Rajandream M.A."/>
            <person name="Lyne M.H."/>
            <person name="Lyne R."/>
            <person name="Stewart A."/>
            <person name="Sgouros J.G."/>
            <person name="Peat N."/>
            <person name="Hayles J."/>
            <person name="Baker S.G."/>
            <person name="Basham D."/>
            <person name="Bowman S."/>
            <person name="Brooks K."/>
            <person name="Brown D."/>
            <person name="Brown S."/>
            <person name="Chillingworth T."/>
            <person name="Churcher C.M."/>
            <person name="Collins M."/>
            <person name="Connor R."/>
            <person name="Cronin A."/>
            <person name="Davis P."/>
            <person name="Feltwell T."/>
            <person name="Fraser A."/>
            <person name="Gentles S."/>
            <person name="Goble A."/>
            <person name="Hamlin N."/>
            <person name="Harris D.E."/>
            <person name="Hidalgo J."/>
            <person name="Hodgson G."/>
            <person name="Holroyd S."/>
            <person name="Hornsby T."/>
            <person name="Howarth S."/>
            <person name="Huckle E.J."/>
            <person name="Hunt S."/>
            <person name="Jagels K."/>
            <person name="James K.D."/>
            <person name="Jones L."/>
            <person name="Jones M."/>
            <person name="Leather S."/>
            <person name="McDonald S."/>
            <person name="McLean J."/>
            <person name="Mooney P."/>
            <person name="Moule S."/>
            <person name="Mungall K.L."/>
            <person name="Murphy L.D."/>
            <person name="Niblett D."/>
            <person name="Odell C."/>
            <person name="Oliver K."/>
            <person name="O'Neil S."/>
            <person name="Pearson D."/>
            <person name="Quail M.A."/>
            <person name="Rabbinowitsch E."/>
            <person name="Rutherford K.M."/>
            <person name="Rutter S."/>
            <person name="Saunders D."/>
            <person name="Seeger K."/>
            <person name="Sharp S."/>
            <person name="Skelton J."/>
            <person name="Simmonds M.N."/>
            <person name="Squares R."/>
            <person name="Squares S."/>
            <person name="Stevens K."/>
            <person name="Taylor K."/>
            <person name="Taylor R.G."/>
            <person name="Tivey A."/>
            <person name="Walsh S.V."/>
            <person name="Warren T."/>
            <person name="Whitehead S."/>
            <person name="Woodward J.R."/>
            <person name="Volckaert G."/>
            <person name="Aert R."/>
            <person name="Robben J."/>
            <person name="Grymonprez B."/>
            <person name="Weltjens I."/>
            <person name="Vanstreels E."/>
            <person name="Rieger M."/>
            <person name="Schaefer M."/>
            <person name="Mueller-Auer S."/>
            <person name="Gabel C."/>
            <person name="Fuchs M."/>
            <person name="Duesterhoeft A."/>
            <person name="Fritzc C."/>
            <person name="Holzer E."/>
            <person name="Moestl D."/>
            <person name="Hilbert H."/>
            <person name="Borzym K."/>
            <person name="Langer I."/>
            <person name="Beck A."/>
            <person name="Lehrach H."/>
            <person name="Reinhardt R."/>
            <person name="Pohl T.M."/>
            <person name="Eger P."/>
            <person name="Zimmermann W."/>
            <person name="Wedler H."/>
            <person name="Wambutt R."/>
            <person name="Purnelle B."/>
            <person name="Goffeau A."/>
            <person name="Cadieu E."/>
            <person name="Dreano S."/>
            <person name="Gloux S."/>
            <person name="Lelaure V."/>
            <person name="Mottier S."/>
            <person name="Galibert F."/>
            <person name="Aves S.J."/>
            <person name="Xiang Z."/>
            <person name="Hunt C."/>
            <person name="Moore K."/>
            <person name="Hurst S.M."/>
            <person name="Lucas M."/>
            <person name="Rochet M."/>
            <person name="Gaillardin C."/>
            <person name="Tallada V.A."/>
            <person name="Garzon A."/>
            <person name="Thode G."/>
            <person name="Daga R.R."/>
            <person name="Cruzado L."/>
            <person name="Jimenez J."/>
            <person name="Sanchez M."/>
            <person name="del Rey F."/>
            <person name="Benito J."/>
            <person name="Dominguez A."/>
            <person name="Revuelta J.L."/>
            <person name="Moreno S."/>
            <person name="Armstrong J."/>
            <person name="Forsburg S.L."/>
            <person name="Cerutti L."/>
            <person name="Lowe T."/>
            <person name="McCombie W.R."/>
            <person name="Paulsen I."/>
            <person name="Potashkin J."/>
            <person name="Shpakovski G.V."/>
            <person name="Ussery D."/>
            <person name="Barrell B.G."/>
            <person name="Nurse P."/>
        </authorList>
    </citation>
    <scope>NUCLEOTIDE SEQUENCE [LARGE SCALE GENOMIC DNA]</scope>
    <source>
        <strain>972 / ATCC 24843</strain>
    </source>
</reference>